<proteinExistence type="evidence at protein level"/>
<name>ES2JA_ODOJI</name>
<comment type="function">
    <text evidence="2 4">Has antibacterial activity against E.coli and S.aureus strains.</text>
</comment>
<comment type="subcellular location">
    <subcellularLocation>
        <location evidence="2">Secreted</location>
    </subcellularLocation>
</comment>
<comment type="tissue specificity">
    <text evidence="5">Expressed by the skin glands.</text>
</comment>
<comment type="mass spectrometry" mass="3818.1155" error="0.0013" method="Electrospray" evidence="2"/>
<comment type="similarity">
    <text evidence="1">Belongs to the frog skin active peptide (FSAP) family. Esculentin subfamily.</text>
</comment>
<comment type="online information" name="The antimicrobial peptide database">
    <link uri="https://wangapd3.com/database/query_output.php?ID=00577"/>
</comment>
<dbReference type="GO" id="GO:0005576">
    <property type="term" value="C:extracellular region"/>
    <property type="evidence" value="ECO:0007669"/>
    <property type="project" value="UniProtKB-SubCell"/>
</dbReference>
<dbReference type="GO" id="GO:0042742">
    <property type="term" value="P:defense response to bacterium"/>
    <property type="evidence" value="ECO:0007669"/>
    <property type="project" value="UniProtKB-KW"/>
</dbReference>
<dbReference type="InterPro" id="IPR012521">
    <property type="entry name" value="Antimicrobial_frog_2"/>
</dbReference>
<dbReference type="Pfam" id="PF08023">
    <property type="entry name" value="Antimicrobial_2"/>
    <property type="match status" value="1"/>
</dbReference>
<organism>
    <name type="scientific">Odorrana jingdongensis</name>
    <name type="common">Jingdong frog</name>
    <name type="synonym">Rana jingdongensis</name>
    <dbReference type="NCBI Taxonomy" id="431936"/>
    <lineage>
        <taxon>Eukaryota</taxon>
        <taxon>Metazoa</taxon>
        <taxon>Chordata</taxon>
        <taxon>Craniata</taxon>
        <taxon>Vertebrata</taxon>
        <taxon>Euteleostomi</taxon>
        <taxon>Amphibia</taxon>
        <taxon>Batrachia</taxon>
        <taxon>Anura</taxon>
        <taxon>Neobatrachia</taxon>
        <taxon>Ranoidea</taxon>
        <taxon>Ranidae</taxon>
        <taxon>Odorrana</taxon>
    </lineage>
</organism>
<reference evidence="4" key="1">
    <citation type="journal article" date="2012" name="J. Proteomics">
        <title>Antimicrobial peptides from the skin of the Asian frog, Odorrana jingdongensis: De novo sequencing and analysis of tandem mass spectrometry data.</title>
        <authorList>
            <person name="Liu J."/>
            <person name="Jiang J."/>
            <person name="Wu Z."/>
            <person name="Xie F."/>
        </authorList>
    </citation>
    <scope>PROTEIN SEQUENCE</scope>
    <scope>PROBABLE FUNCTION</scope>
    <scope>SUBCELLULAR LOCATION</scope>
    <scope>MASS SPECTROMETRY</scope>
    <source>
        <tissue evidence="2">Skin secretion</tissue>
    </source>
</reference>
<protein>
    <recommendedName>
        <fullName evidence="3">Esculentin-2JDa</fullName>
    </recommendedName>
</protein>
<keyword id="KW-0878">Amphibian defense peptide</keyword>
<keyword id="KW-0044">Antibiotic</keyword>
<keyword id="KW-0929">Antimicrobial</keyword>
<keyword id="KW-0903">Direct protein sequencing</keyword>
<keyword id="KW-1015">Disulfide bond</keyword>
<keyword id="KW-0964">Secreted</keyword>
<evidence type="ECO:0000255" key="1"/>
<evidence type="ECO:0000269" key="2">
    <source>
    </source>
</evidence>
<evidence type="ECO:0000303" key="3">
    <source>
    </source>
</evidence>
<evidence type="ECO:0000305" key="4"/>
<evidence type="ECO:0000305" key="5">
    <source>
    </source>
</evidence>
<feature type="peptide" id="PRO_0000420138" description="Esculentin-2JDa" evidence="2">
    <location>
        <begin position="1"/>
        <end position="37"/>
    </location>
</feature>
<feature type="disulfide bond" evidence="2">
    <location>
        <begin position="31"/>
        <end position="37"/>
    </location>
</feature>
<feature type="unsure residue" description="L or I" evidence="2">
    <location>
        <position position="12"/>
    </location>
</feature>
<feature type="unsure residue" description="I or L" evidence="2">
    <location>
        <position position="13"/>
    </location>
</feature>
<feature type="unsure residue" description="G or K" evidence="2">
    <location>
        <position position="14"/>
    </location>
</feature>
<feature type="unsure residue" description="K or G" evidence="2">
    <location>
        <position position="15"/>
    </location>
</feature>
<feature type="unsure residue" description="G or K" evidence="2">
    <location>
        <position position="22"/>
    </location>
</feature>
<feature type="unsure residue" description="K or G" evidence="2">
    <location>
        <position position="23"/>
    </location>
</feature>
<feature type="unsure residue" description="L or I" evidence="2">
    <location>
        <position position="26"/>
    </location>
</feature>
<feature type="unsure residue" description="L or I" evidence="2">
    <location>
        <position position="28"/>
    </location>
</feature>
<feature type="unsure residue" description="I or L" evidence="2">
    <location>
        <position position="33"/>
    </location>
</feature>
<sequence length="37" mass="3822">GLFTLIKGAAKLIGKTVAKEAGKTGLELMACKITNQC</sequence>
<accession>B3A0M8</accession>